<organism>
    <name type="scientific">Mus musculus</name>
    <name type="common">Mouse</name>
    <dbReference type="NCBI Taxonomy" id="10090"/>
    <lineage>
        <taxon>Eukaryota</taxon>
        <taxon>Metazoa</taxon>
        <taxon>Chordata</taxon>
        <taxon>Craniata</taxon>
        <taxon>Vertebrata</taxon>
        <taxon>Euteleostomi</taxon>
        <taxon>Mammalia</taxon>
        <taxon>Eutheria</taxon>
        <taxon>Euarchontoglires</taxon>
        <taxon>Glires</taxon>
        <taxon>Rodentia</taxon>
        <taxon>Myomorpha</taxon>
        <taxon>Muroidea</taxon>
        <taxon>Muridae</taxon>
        <taxon>Murinae</taxon>
        <taxon>Mus</taxon>
        <taxon>Mus</taxon>
    </lineage>
</organism>
<reference key="1">
    <citation type="journal article" date="2005" name="Science">
        <title>The transcriptional landscape of the mammalian genome.</title>
        <authorList>
            <person name="Carninci P."/>
            <person name="Kasukawa T."/>
            <person name="Katayama S."/>
            <person name="Gough J."/>
            <person name="Frith M.C."/>
            <person name="Maeda N."/>
            <person name="Oyama R."/>
            <person name="Ravasi T."/>
            <person name="Lenhard B."/>
            <person name="Wells C."/>
            <person name="Kodzius R."/>
            <person name="Shimokawa K."/>
            <person name="Bajic V.B."/>
            <person name="Brenner S.E."/>
            <person name="Batalov S."/>
            <person name="Forrest A.R."/>
            <person name="Zavolan M."/>
            <person name="Davis M.J."/>
            <person name="Wilming L.G."/>
            <person name="Aidinis V."/>
            <person name="Allen J.E."/>
            <person name="Ambesi-Impiombato A."/>
            <person name="Apweiler R."/>
            <person name="Aturaliya R.N."/>
            <person name="Bailey T.L."/>
            <person name="Bansal M."/>
            <person name="Baxter L."/>
            <person name="Beisel K.W."/>
            <person name="Bersano T."/>
            <person name="Bono H."/>
            <person name="Chalk A.M."/>
            <person name="Chiu K.P."/>
            <person name="Choudhary V."/>
            <person name="Christoffels A."/>
            <person name="Clutterbuck D.R."/>
            <person name="Crowe M.L."/>
            <person name="Dalla E."/>
            <person name="Dalrymple B.P."/>
            <person name="de Bono B."/>
            <person name="Della Gatta G."/>
            <person name="di Bernardo D."/>
            <person name="Down T."/>
            <person name="Engstrom P."/>
            <person name="Fagiolini M."/>
            <person name="Faulkner G."/>
            <person name="Fletcher C.F."/>
            <person name="Fukushima T."/>
            <person name="Furuno M."/>
            <person name="Futaki S."/>
            <person name="Gariboldi M."/>
            <person name="Georgii-Hemming P."/>
            <person name="Gingeras T.R."/>
            <person name="Gojobori T."/>
            <person name="Green R.E."/>
            <person name="Gustincich S."/>
            <person name="Harbers M."/>
            <person name="Hayashi Y."/>
            <person name="Hensch T.K."/>
            <person name="Hirokawa N."/>
            <person name="Hill D."/>
            <person name="Huminiecki L."/>
            <person name="Iacono M."/>
            <person name="Ikeo K."/>
            <person name="Iwama A."/>
            <person name="Ishikawa T."/>
            <person name="Jakt M."/>
            <person name="Kanapin A."/>
            <person name="Katoh M."/>
            <person name="Kawasawa Y."/>
            <person name="Kelso J."/>
            <person name="Kitamura H."/>
            <person name="Kitano H."/>
            <person name="Kollias G."/>
            <person name="Krishnan S.P."/>
            <person name="Kruger A."/>
            <person name="Kummerfeld S.K."/>
            <person name="Kurochkin I.V."/>
            <person name="Lareau L.F."/>
            <person name="Lazarevic D."/>
            <person name="Lipovich L."/>
            <person name="Liu J."/>
            <person name="Liuni S."/>
            <person name="McWilliam S."/>
            <person name="Madan Babu M."/>
            <person name="Madera M."/>
            <person name="Marchionni L."/>
            <person name="Matsuda H."/>
            <person name="Matsuzawa S."/>
            <person name="Miki H."/>
            <person name="Mignone F."/>
            <person name="Miyake S."/>
            <person name="Morris K."/>
            <person name="Mottagui-Tabar S."/>
            <person name="Mulder N."/>
            <person name="Nakano N."/>
            <person name="Nakauchi H."/>
            <person name="Ng P."/>
            <person name="Nilsson R."/>
            <person name="Nishiguchi S."/>
            <person name="Nishikawa S."/>
            <person name="Nori F."/>
            <person name="Ohara O."/>
            <person name="Okazaki Y."/>
            <person name="Orlando V."/>
            <person name="Pang K.C."/>
            <person name="Pavan W.J."/>
            <person name="Pavesi G."/>
            <person name="Pesole G."/>
            <person name="Petrovsky N."/>
            <person name="Piazza S."/>
            <person name="Reed J."/>
            <person name="Reid J.F."/>
            <person name="Ring B.Z."/>
            <person name="Ringwald M."/>
            <person name="Rost B."/>
            <person name="Ruan Y."/>
            <person name="Salzberg S.L."/>
            <person name="Sandelin A."/>
            <person name="Schneider C."/>
            <person name="Schoenbach C."/>
            <person name="Sekiguchi K."/>
            <person name="Semple C.A."/>
            <person name="Seno S."/>
            <person name="Sessa L."/>
            <person name="Sheng Y."/>
            <person name="Shibata Y."/>
            <person name="Shimada H."/>
            <person name="Shimada K."/>
            <person name="Silva D."/>
            <person name="Sinclair B."/>
            <person name="Sperling S."/>
            <person name="Stupka E."/>
            <person name="Sugiura K."/>
            <person name="Sultana R."/>
            <person name="Takenaka Y."/>
            <person name="Taki K."/>
            <person name="Tammoja K."/>
            <person name="Tan S.L."/>
            <person name="Tang S."/>
            <person name="Taylor M.S."/>
            <person name="Tegner J."/>
            <person name="Teichmann S.A."/>
            <person name="Ueda H.R."/>
            <person name="van Nimwegen E."/>
            <person name="Verardo R."/>
            <person name="Wei C.L."/>
            <person name="Yagi K."/>
            <person name="Yamanishi H."/>
            <person name="Zabarovsky E."/>
            <person name="Zhu S."/>
            <person name="Zimmer A."/>
            <person name="Hide W."/>
            <person name="Bult C."/>
            <person name="Grimmond S.M."/>
            <person name="Teasdale R.D."/>
            <person name="Liu E.T."/>
            <person name="Brusic V."/>
            <person name="Quackenbush J."/>
            <person name="Wahlestedt C."/>
            <person name="Mattick J.S."/>
            <person name="Hume D.A."/>
            <person name="Kai C."/>
            <person name="Sasaki D."/>
            <person name="Tomaru Y."/>
            <person name="Fukuda S."/>
            <person name="Kanamori-Katayama M."/>
            <person name="Suzuki M."/>
            <person name="Aoki J."/>
            <person name="Arakawa T."/>
            <person name="Iida J."/>
            <person name="Imamura K."/>
            <person name="Itoh M."/>
            <person name="Kato T."/>
            <person name="Kawaji H."/>
            <person name="Kawagashira N."/>
            <person name="Kawashima T."/>
            <person name="Kojima M."/>
            <person name="Kondo S."/>
            <person name="Konno H."/>
            <person name="Nakano K."/>
            <person name="Ninomiya N."/>
            <person name="Nishio T."/>
            <person name="Okada M."/>
            <person name="Plessy C."/>
            <person name="Shibata K."/>
            <person name="Shiraki T."/>
            <person name="Suzuki S."/>
            <person name="Tagami M."/>
            <person name="Waki K."/>
            <person name="Watahiki A."/>
            <person name="Okamura-Oho Y."/>
            <person name="Suzuki H."/>
            <person name="Kawai J."/>
            <person name="Hayashizaki Y."/>
        </authorList>
    </citation>
    <scope>NUCLEOTIDE SEQUENCE [LARGE SCALE MRNA] (ISOFORMS 1 AND 3)</scope>
    <source>
        <strain>C57BL/6J</strain>
        <strain>NOD</strain>
        <tissue>Liver</tissue>
        <tissue>Mammary gland</tissue>
        <tissue>Stomach</tissue>
        <tissue>Thymus</tissue>
    </source>
</reference>
<reference key="2">
    <citation type="journal article" date="2009" name="PLoS Biol.">
        <title>Lineage-specific biology revealed by a finished genome assembly of the mouse.</title>
        <authorList>
            <person name="Church D.M."/>
            <person name="Goodstadt L."/>
            <person name="Hillier L.W."/>
            <person name="Zody M.C."/>
            <person name="Goldstein S."/>
            <person name="She X."/>
            <person name="Bult C.J."/>
            <person name="Agarwala R."/>
            <person name="Cherry J.L."/>
            <person name="DiCuccio M."/>
            <person name="Hlavina W."/>
            <person name="Kapustin Y."/>
            <person name="Meric P."/>
            <person name="Maglott D."/>
            <person name="Birtle Z."/>
            <person name="Marques A.C."/>
            <person name="Graves T."/>
            <person name="Zhou S."/>
            <person name="Teague B."/>
            <person name="Potamousis K."/>
            <person name="Churas C."/>
            <person name="Place M."/>
            <person name="Herschleb J."/>
            <person name="Runnheim R."/>
            <person name="Forrest D."/>
            <person name="Amos-Landgraf J."/>
            <person name="Schwartz D.C."/>
            <person name="Cheng Z."/>
            <person name="Lindblad-Toh K."/>
            <person name="Eichler E.E."/>
            <person name="Ponting C.P."/>
        </authorList>
    </citation>
    <scope>NUCLEOTIDE SEQUENCE [LARGE SCALE GENOMIC DNA]</scope>
    <source>
        <strain>C57BL/6J</strain>
    </source>
</reference>
<reference key="3">
    <citation type="journal article" date="2004" name="Genome Res.">
        <title>The status, quality, and expansion of the NIH full-length cDNA project: the Mammalian Gene Collection (MGC).</title>
        <authorList>
            <consortium name="The MGC Project Team"/>
        </authorList>
    </citation>
    <scope>NUCLEOTIDE SEQUENCE [LARGE SCALE MRNA] (ISOFORM 1)</scope>
    <source>
        <strain>Czech II</strain>
        <tissue>Mammary tumor</tissue>
    </source>
</reference>
<reference key="4">
    <citation type="journal article" date="2010" name="Cell">
        <title>A tissue-specific atlas of mouse protein phosphorylation and expression.</title>
        <authorList>
            <person name="Huttlin E.L."/>
            <person name="Jedrychowski M.P."/>
            <person name="Elias J.E."/>
            <person name="Goswami T."/>
            <person name="Rad R."/>
            <person name="Beausoleil S.A."/>
            <person name="Villen J."/>
            <person name="Haas W."/>
            <person name="Sowa M.E."/>
            <person name="Gygi S.P."/>
        </authorList>
    </citation>
    <scope>IDENTIFICATION BY MASS SPECTROMETRY [LARGE SCALE ANALYSIS]</scope>
    <source>
        <tissue>Brown adipose tissue</tissue>
        <tissue>Heart</tissue>
        <tissue>Kidney</tissue>
        <tissue>Liver</tissue>
        <tissue>Lung</tissue>
        <tissue>Pancreas</tissue>
        <tissue>Testis</tissue>
    </source>
</reference>
<reference key="5">
    <citation type="journal article" date="2013" name="Mol. Cell">
        <title>SIRT5-mediated lysine desuccinylation impacts diverse metabolic pathways.</title>
        <authorList>
            <person name="Park J."/>
            <person name="Chen Y."/>
            <person name="Tishkoff D.X."/>
            <person name="Peng C."/>
            <person name="Tan M."/>
            <person name="Dai L."/>
            <person name="Xie Z."/>
            <person name="Zhang Y."/>
            <person name="Zwaans B.M."/>
            <person name="Skinner M.E."/>
            <person name="Lombard D.B."/>
            <person name="Zhao Y."/>
        </authorList>
    </citation>
    <scope>SUCCINYLATION [LARGE SCALE ANALYSIS] AT LYS-101</scope>
    <scope>IDENTIFICATION BY MASS SPECTROMETRY [LARGE SCALE ANALYSIS]</scope>
    <source>
        <tissue>Liver</tissue>
    </source>
</reference>
<reference key="6">
    <citation type="journal article" date="2013" name="Proc. Natl. Acad. Sci. U.S.A.">
        <title>Label-free quantitative proteomics of the lysine acetylome in mitochondria identifies substrates of SIRT3 in metabolic pathways.</title>
        <authorList>
            <person name="Rardin M.J."/>
            <person name="Newman J.C."/>
            <person name="Held J.M."/>
            <person name="Cusack M.P."/>
            <person name="Sorensen D.J."/>
            <person name="Li B."/>
            <person name="Schilling B."/>
            <person name="Mooney S.D."/>
            <person name="Kahn C.R."/>
            <person name="Verdin E."/>
            <person name="Gibson B.W."/>
        </authorList>
    </citation>
    <scope>ACETYLATION [LARGE SCALE ANALYSIS] AT LYS-101</scope>
    <scope>IDENTIFICATION BY MASS SPECTROMETRY [LARGE SCALE ANALYSIS]</scope>
    <source>
        <tissue>Liver</tissue>
    </source>
</reference>
<evidence type="ECO:0000250" key="1"/>
<evidence type="ECO:0000255" key="2"/>
<evidence type="ECO:0000303" key="3">
    <source>
    </source>
</evidence>
<evidence type="ECO:0000305" key="4"/>
<evidence type="ECO:0007744" key="5">
    <source>
    </source>
</evidence>
<evidence type="ECO:0007744" key="6">
    <source>
    </source>
</evidence>
<dbReference type="EMBL" id="AK005030">
    <property type="protein sequence ID" value="BAB23757.1"/>
    <property type="status" value="ALT_FRAME"/>
    <property type="molecule type" value="mRNA"/>
</dbReference>
<dbReference type="EMBL" id="AK153878">
    <property type="protein sequence ID" value="BAE32227.1"/>
    <property type="status" value="ALT_FRAME"/>
    <property type="molecule type" value="mRNA"/>
</dbReference>
<dbReference type="EMBL" id="AK160482">
    <property type="protein sequence ID" value="BAE35813.1"/>
    <property type="molecule type" value="mRNA"/>
</dbReference>
<dbReference type="EMBL" id="AK166388">
    <property type="protein sequence ID" value="BAE38747.1"/>
    <property type="molecule type" value="mRNA"/>
</dbReference>
<dbReference type="EMBL" id="AK166965">
    <property type="protein sequence ID" value="BAE39148.1"/>
    <property type="molecule type" value="mRNA"/>
</dbReference>
<dbReference type="EMBL" id="AL844206">
    <property type="status" value="NOT_ANNOTATED_CDS"/>
    <property type="molecule type" value="Genomic_DNA"/>
</dbReference>
<dbReference type="EMBL" id="BX293563">
    <property type="status" value="NOT_ANNOTATED_CDS"/>
    <property type="molecule type" value="Genomic_DNA"/>
</dbReference>
<dbReference type="EMBL" id="BC025104">
    <property type="protein sequence ID" value="AAH25104.1"/>
    <property type="status" value="ALT_INIT"/>
    <property type="molecule type" value="mRNA"/>
</dbReference>
<dbReference type="CCDS" id="CCDS18447.2">
    <molecule id="Q3TLP5-1"/>
</dbReference>
<dbReference type="RefSeq" id="NP_001241683.1">
    <molecule id="Q3TLP5-3"/>
    <property type="nucleotide sequence ID" value="NM_001254754.1"/>
</dbReference>
<dbReference type="RefSeq" id="NP_081004.2">
    <molecule id="Q3TLP5-1"/>
    <property type="nucleotide sequence ID" value="NM_026728.4"/>
</dbReference>
<dbReference type="RefSeq" id="XP_011238875.1">
    <molecule id="Q3TLP5-3"/>
    <property type="nucleotide sequence ID" value="XM_011240573.3"/>
</dbReference>
<dbReference type="RefSeq" id="XP_017175803.1">
    <molecule id="Q3TLP5-3"/>
    <property type="nucleotide sequence ID" value="XM_017320314.3"/>
</dbReference>
<dbReference type="SMR" id="Q3TLP5"/>
<dbReference type="BioGRID" id="206580">
    <property type="interactions" value="2"/>
</dbReference>
<dbReference type="FunCoup" id="Q3TLP5">
    <property type="interactions" value="851"/>
</dbReference>
<dbReference type="STRING" id="10090.ENSMUSP00000051268"/>
<dbReference type="iPTMnet" id="Q3TLP5"/>
<dbReference type="PhosphoSitePlus" id="Q3TLP5"/>
<dbReference type="SwissPalm" id="Q3TLP5"/>
<dbReference type="jPOST" id="Q3TLP5"/>
<dbReference type="PaxDb" id="10090-ENSMUSP00000051268"/>
<dbReference type="PeptideAtlas" id="Q3TLP5"/>
<dbReference type="ProteomicsDB" id="275433">
    <molecule id="Q3TLP5-1"/>
</dbReference>
<dbReference type="ProteomicsDB" id="275434">
    <molecule id="Q3TLP5-2"/>
</dbReference>
<dbReference type="ProteomicsDB" id="275435">
    <molecule id="Q3TLP5-3"/>
</dbReference>
<dbReference type="Antibodypedia" id="19158">
    <property type="antibodies" value="98 antibodies from 19 providers"/>
</dbReference>
<dbReference type="Ensembl" id="ENSMUST00000052999.13">
    <molecule id="Q3TLP5-1"/>
    <property type="protein sequence ID" value="ENSMUSP00000051268.7"/>
    <property type="gene ID" value="ENSMUSG00000028601.19"/>
</dbReference>
<dbReference type="Ensembl" id="ENSMUST00000116307.8">
    <molecule id="Q3TLP5-2"/>
    <property type="protein sequence ID" value="ENSMUSP00000112009.2"/>
    <property type="gene ID" value="ENSMUSG00000028601.19"/>
</dbReference>
<dbReference type="Ensembl" id="ENSMUST00000116309.11">
    <molecule id="Q3TLP5-1"/>
    <property type="protein sequence ID" value="ENSMUSP00000159913.1"/>
    <property type="gene ID" value="ENSMUSG00000028601.19"/>
</dbReference>
<dbReference type="GeneID" id="52430"/>
<dbReference type="KEGG" id="mmu:52430"/>
<dbReference type="UCSC" id="uc008uat.3">
    <molecule id="Q3TLP5-1"/>
    <property type="organism name" value="mouse"/>
</dbReference>
<dbReference type="AGR" id="MGI:1289238"/>
<dbReference type="CTD" id="55268"/>
<dbReference type="MGI" id="MGI:1289238">
    <property type="gene designation" value="Echdc2"/>
</dbReference>
<dbReference type="VEuPathDB" id="HostDB:ENSMUSG00000028601"/>
<dbReference type="eggNOG" id="KOG1679">
    <property type="taxonomic scope" value="Eukaryota"/>
</dbReference>
<dbReference type="GeneTree" id="ENSGT00940000158798"/>
<dbReference type="HOGENOM" id="CLU_009834_7_6_1"/>
<dbReference type="InParanoid" id="Q3TLP5"/>
<dbReference type="OMA" id="WRSVAFS"/>
<dbReference type="OrthoDB" id="410701at2759"/>
<dbReference type="PhylomeDB" id="Q3TLP5"/>
<dbReference type="TreeFam" id="TF314276"/>
<dbReference type="BioGRID-ORCS" id="52430">
    <property type="hits" value="4 hits in 78 CRISPR screens"/>
</dbReference>
<dbReference type="ChiTaRS" id="Echdc2">
    <property type="organism name" value="mouse"/>
</dbReference>
<dbReference type="PRO" id="PR:Q3TLP5"/>
<dbReference type="Proteomes" id="UP000000589">
    <property type="component" value="Chromosome 4"/>
</dbReference>
<dbReference type="RNAct" id="Q3TLP5">
    <property type="molecule type" value="protein"/>
</dbReference>
<dbReference type="Bgee" id="ENSMUSG00000028601">
    <property type="expression patterns" value="Expressed in embryonic cell in blastocyst and 226 other cell types or tissues"/>
</dbReference>
<dbReference type="ExpressionAtlas" id="Q3TLP5">
    <property type="expression patterns" value="baseline and differential"/>
</dbReference>
<dbReference type="GO" id="GO:0005739">
    <property type="term" value="C:mitochondrion"/>
    <property type="evidence" value="ECO:0007669"/>
    <property type="project" value="UniProtKB-SubCell"/>
</dbReference>
<dbReference type="GO" id="GO:0016829">
    <property type="term" value="F:lyase activity"/>
    <property type="evidence" value="ECO:0007669"/>
    <property type="project" value="UniProtKB-KW"/>
</dbReference>
<dbReference type="GO" id="GO:0006631">
    <property type="term" value="P:fatty acid metabolic process"/>
    <property type="evidence" value="ECO:0007669"/>
    <property type="project" value="UniProtKB-KW"/>
</dbReference>
<dbReference type="CDD" id="cd06558">
    <property type="entry name" value="crotonase-like"/>
    <property type="match status" value="1"/>
</dbReference>
<dbReference type="FunFam" id="3.90.226.10:FF:000022">
    <property type="entry name" value="methylglutaconyl-CoA hydratase, mitochondrial isoform X1"/>
    <property type="match status" value="1"/>
</dbReference>
<dbReference type="FunFam" id="1.10.12.10:FF:000001">
    <property type="entry name" value="Probable enoyl-CoA hydratase, mitochondrial"/>
    <property type="match status" value="1"/>
</dbReference>
<dbReference type="Gene3D" id="3.90.226.10">
    <property type="entry name" value="2-enoyl-CoA Hydratase, Chain A, domain 1"/>
    <property type="match status" value="1"/>
</dbReference>
<dbReference type="Gene3D" id="1.10.12.10">
    <property type="entry name" value="Lyase 2-enoyl-coa Hydratase, Chain A, domain 2"/>
    <property type="match status" value="1"/>
</dbReference>
<dbReference type="InterPro" id="IPR029045">
    <property type="entry name" value="ClpP/crotonase-like_dom_sf"/>
</dbReference>
<dbReference type="InterPro" id="IPR018376">
    <property type="entry name" value="Enoyl-CoA_hyd/isom_CS"/>
</dbReference>
<dbReference type="InterPro" id="IPR001753">
    <property type="entry name" value="Enoyl-CoA_hydra/iso"/>
</dbReference>
<dbReference type="InterPro" id="IPR014748">
    <property type="entry name" value="Enoyl-CoA_hydra_C"/>
</dbReference>
<dbReference type="PANTHER" id="PTHR11941:SF44">
    <property type="entry name" value="ENOYL-COA HYDRATASE DOMAIN-CONTAINING PROTEIN 2, MITOCHONDRIAL"/>
    <property type="match status" value="1"/>
</dbReference>
<dbReference type="PANTHER" id="PTHR11941">
    <property type="entry name" value="ENOYL-COA HYDRATASE-RELATED"/>
    <property type="match status" value="1"/>
</dbReference>
<dbReference type="Pfam" id="PF00378">
    <property type="entry name" value="ECH_1"/>
    <property type="match status" value="1"/>
</dbReference>
<dbReference type="SUPFAM" id="SSF52096">
    <property type="entry name" value="ClpP/crotonase"/>
    <property type="match status" value="1"/>
</dbReference>
<dbReference type="PROSITE" id="PS00166">
    <property type="entry name" value="ENOYL_COA_HYDRATASE"/>
    <property type="match status" value="1"/>
</dbReference>
<name>ECHD2_MOUSE</name>
<protein>
    <recommendedName>
        <fullName>Enoyl-CoA hydratase domain-containing protein 2, mitochondrial</fullName>
    </recommendedName>
</protein>
<comment type="subcellular location">
    <subcellularLocation>
        <location evidence="4">Mitochondrion</location>
    </subcellularLocation>
</comment>
<comment type="alternative products">
    <event type="alternative splicing"/>
    <isoform>
        <id>Q3TLP5-1</id>
        <name>1</name>
        <sequence type="displayed"/>
    </isoform>
    <isoform>
        <id>Q3TLP5-2</id>
        <name>2</name>
        <sequence type="described" ref="VSP_029179"/>
    </isoform>
    <isoform>
        <id>Q3TLP5-3</id>
        <name>3</name>
        <sequence type="described" ref="VSP_029178"/>
    </isoform>
</comment>
<comment type="similarity">
    <text evidence="4">Belongs to the enoyl-CoA hydratase/isomerase family.</text>
</comment>
<comment type="sequence caution" evidence="4">
    <conflict type="erroneous initiation">
        <sequence resource="EMBL-CDS" id="AAH25104"/>
    </conflict>
</comment>
<comment type="sequence caution" evidence="4">
    <conflict type="frameshift">
        <sequence resource="EMBL-CDS" id="BAB23757"/>
    </conflict>
</comment>
<comment type="sequence caution" evidence="4">
    <conflict type="frameshift">
        <sequence resource="EMBL-CDS" id="BAE32227"/>
    </conflict>
</comment>
<feature type="transit peptide" description="Mitochondrion" evidence="2">
    <location>
        <begin position="1"/>
        <end position="17"/>
    </location>
</feature>
<feature type="chain" id="PRO_0000309460" description="Enoyl-CoA hydratase domain-containing protein 2, mitochondrial">
    <location>
        <begin position="18"/>
        <end position="296"/>
    </location>
</feature>
<feature type="site" description="Important for catalytic activity" evidence="1">
    <location>
        <position position="146"/>
    </location>
</feature>
<feature type="site" description="Important for catalytic activity" evidence="1">
    <location>
        <position position="166"/>
    </location>
</feature>
<feature type="modified residue" description="N6-acetyllysine; alternate" evidence="5">
    <location>
        <position position="101"/>
    </location>
</feature>
<feature type="modified residue" description="N6-succinyllysine; alternate" evidence="6">
    <location>
        <position position="101"/>
    </location>
</feature>
<feature type="splice variant" id="VSP_029178" description="In isoform 3." evidence="3">
    <location>
        <begin position="1"/>
        <end position="105"/>
    </location>
</feature>
<feature type="splice variant" id="VSP_029179" description="In isoform 2." evidence="4">
    <location>
        <begin position="126"/>
        <end position="156"/>
    </location>
</feature>
<feature type="sequence conflict" description="In Ref. 1; BAE32227/BAE38747 and 3; AAH25104." evidence="4" ref="1 3">
    <original>S</original>
    <variation>P</variation>
    <location>
        <position position="14"/>
    </location>
</feature>
<feature type="sequence conflict" description="In Ref. 1; BAE38747 and 3; AAH25104." evidence="4" ref="1 3">
    <original>L</original>
    <variation>V</variation>
    <location>
        <position position="50"/>
    </location>
</feature>
<feature type="sequence conflict" description="In Ref. 1; BAB23757." evidence="4" ref="1">
    <original>R</original>
    <variation>G</variation>
    <location>
        <position position="53"/>
    </location>
</feature>
<feature type="sequence conflict" description="In Ref. 1; BAE32227/BAE38747 and 3; AAH25104." evidence="4" ref="1 3">
    <original>N</original>
    <variation>H</variation>
    <location>
        <position position="55"/>
    </location>
</feature>
<feature type="sequence conflict" description="In Ref. 1; BAE32227/BAE38747 and 3; AAH25104." evidence="4" ref="1 3">
    <original>V</original>
    <variation>A</variation>
    <location>
        <position position="130"/>
    </location>
</feature>
<sequence>MLRVLPRALRLPCSWRFSGARDCASHATTRTPEIQVQALTGPNQGITEILMNRPNARNALGNVFVSELLEALAQLREDQQVRVLLFRSAVKGVFCAGADLKEREQMSDVEVGTFVQRLRGLMSEIAAFPVPTIAAMDGFALGGGLELALACDLRIAASSAVMGLIETTRGLLPGAGGTQRLPRCLGVALAKELIFTGRRLNGAQARELGLVNHAVAQNEEGNAAYHRALALAQEILPQAPIAVRLGKVAIDRGMEVDIASGMAIEQMCYAQNIPTQDRLEGMAAFREKRAPKFVGK</sequence>
<gene>
    <name type="primary">Echdc2</name>
    <name type="synonym">D4Ertd765e</name>
</gene>
<keyword id="KW-0007">Acetylation</keyword>
<keyword id="KW-0025">Alternative splicing</keyword>
<keyword id="KW-0276">Fatty acid metabolism</keyword>
<keyword id="KW-0443">Lipid metabolism</keyword>
<keyword id="KW-0456">Lyase</keyword>
<keyword id="KW-0496">Mitochondrion</keyword>
<keyword id="KW-1185">Reference proteome</keyword>
<keyword id="KW-0809">Transit peptide</keyword>
<accession>Q3TLP5</accession>
<accession>A2APS6</accession>
<accession>Q3TKJ7</accession>
<accession>Q3TV08</accession>
<accession>Q3U553</accession>
<accession>Q8R3K4</accession>
<accession>Q9DBD3</accession>
<proteinExistence type="evidence at protein level"/>